<protein>
    <recommendedName>
        <fullName>Rab GDP dissociation inhibitor beta</fullName>
        <shortName>Rab GDI beta</shortName>
    </recommendedName>
    <alternativeName>
        <fullName>Guanosine diphosphate dissociation inhibitor 2</fullName>
        <shortName>GDI-2</shortName>
    </alternativeName>
</protein>
<proteinExistence type="evidence at transcript level"/>
<dbReference type="EMBL" id="CR858330">
    <property type="protein sequence ID" value="CAH90566.1"/>
    <property type="molecule type" value="mRNA"/>
</dbReference>
<dbReference type="RefSeq" id="NP_001125301.1">
    <property type="nucleotide sequence ID" value="NM_001131829.2"/>
</dbReference>
<dbReference type="SMR" id="Q5RCE1"/>
<dbReference type="STRING" id="9601.ENSPPYP00000002386"/>
<dbReference type="GeneID" id="100172200"/>
<dbReference type="KEGG" id="pon:100172200"/>
<dbReference type="CTD" id="2665"/>
<dbReference type="eggNOG" id="KOG1439">
    <property type="taxonomic scope" value="Eukaryota"/>
</dbReference>
<dbReference type="InParanoid" id="Q5RCE1"/>
<dbReference type="OrthoDB" id="9446342at2759"/>
<dbReference type="Proteomes" id="UP000001595">
    <property type="component" value="Unplaced"/>
</dbReference>
<dbReference type="GO" id="GO:0005794">
    <property type="term" value="C:Golgi apparatus"/>
    <property type="evidence" value="ECO:0007669"/>
    <property type="project" value="UniProtKB-SubCell"/>
</dbReference>
<dbReference type="GO" id="GO:0016020">
    <property type="term" value="C:membrane"/>
    <property type="evidence" value="ECO:0007669"/>
    <property type="project" value="UniProtKB-SubCell"/>
</dbReference>
<dbReference type="GO" id="GO:0005096">
    <property type="term" value="F:GTPase activator activity"/>
    <property type="evidence" value="ECO:0007669"/>
    <property type="project" value="UniProtKB-KW"/>
</dbReference>
<dbReference type="GO" id="GO:0005093">
    <property type="term" value="F:Rab GDP-dissociation inhibitor activity"/>
    <property type="evidence" value="ECO:0007669"/>
    <property type="project" value="InterPro"/>
</dbReference>
<dbReference type="GO" id="GO:1902018">
    <property type="term" value="P:negative regulation of cilium assembly"/>
    <property type="evidence" value="ECO:0000250"/>
    <property type="project" value="UniProtKB"/>
</dbReference>
<dbReference type="GO" id="GO:1903565">
    <property type="term" value="P:negative regulation of protein localization to cilium"/>
    <property type="evidence" value="ECO:0000250"/>
    <property type="project" value="UniProtKB"/>
</dbReference>
<dbReference type="GO" id="GO:0015031">
    <property type="term" value="P:protein transport"/>
    <property type="evidence" value="ECO:0007669"/>
    <property type="project" value="InterPro"/>
</dbReference>
<dbReference type="GO" id="GO:0007264">
    <property type="term" value="P:small GTPase-mediated signal transduction"/>
    <property type="evidence" value="ECO:0007669"/>
    <property type="project" value="InterPro"/>
</dbReference>
<dbReference type="GO" id="GO:0016192">
    <property type="term" value="P:vesicle-mediated transport"/>
    <property type="evidence" value="ECO:0007669"/>
    <property type="project" value="TreeGrafter"/>
</dbReference>
<dbReference type="FunFam" id="1.10.405.10:FF:000001">
    <property type="entry name" value="Rab GDP dissociation inhibitor"/>
    <property type="match status" value="1"/>
</dbReference>
<dbReference type="FunFam" id="3.30.519.10:FF:000005">
    <property type="entry name" value="Rab GDP dissociation inhibitor"/>
    <property type="match status" value="1"/>
</dbReference>
<dbReference type="FunFam" id="3.30.519.10:FF:000014">
    <property type="entry name" value="Rab GDP dissociation inhibitor"/>
    <property type="match status" value="1"/>
</dbReference>
<dbReference type="FunFam" id="3.50.50.60:FF:000158">
    <property type="entry name" value="Rab GDP dissociation inhibitor"/>
    <property type="match status" value="1"/>
</dbReference>
<dbReference type="FunFam" id="3.50.50.60:FF:000232">
    <property type="entry name" value="Rab GDP dissociation inhibitor"/>
    <property type="match status" value="1"/>
</dbReference>
<dbReference type="Gene3D" id="3.50.50.60">
    <property type="entry name" value="FAD/NAD(P)-binding domain"/>
    <property type="match status" value="1"/>
</dbReference>
<dbReference type="Gene3D" id="1.10.405.10">
    <property type="entry name" value="Guanine Nucleotide Dissociation Inhibitor, domain 1"/>
    <property type="match status" value="1"/>
</dbReference>
<dbReference type="Gene3D" id="3.30.519.10">
    <property type="entry name" value="Guanine Nucleotide Dissociation Inhibitor, domain 2"/>
    <property type="match status" value="1"/>
</dbReference>
<dbReference type="InterPro" id="IPR036188">
    <property type="entry name" value="FAD/NAD-bd_sf"/>
</dbReference>
<dbReference type="InterPro" id="IPR018203">
    <property type="entry name" value="GDP_dissociation_inhibitor"/>
</dbReference>
<dbReference type="InterPro" id="IPR000806">
    <property type="entry name" value="RabGDI"/>
</dbReference>
<dbReference type="PANTHER" id="PTHR11787:SF1">
    <property type="entry name" value="RAB GDP DISSOCIATION INHIBITOR BETA"/>
    <property type="match status" value="1"/>
</dbReference>
<dbReference type="PANTHER" id="PTHR11787">
    <property type="entry name" value="RAB GDP-DISSOCIATION INHIBITOR"/>
    <property type="match status" value="1"/>
</dbReference>
<dbReference type="Pfam" id="PF00996">
    <property type="entry name" value="GDI"/>
    <property type="match status" value="1"/>
</dbReference>
<dbReference type="PRINTS" id="PR00892">
    <property type="entry name" value="RABGDI"/>
</dbReference>
<dbReference type="PRINTS" id="PR00891">
    <property type="entry name" value="RABGDIREP"/>
</dbReference>
<dbReference type="SUPFAM" id="SSF51905">
    <property type="entry name" value="FAD/NAD(P)-binding domain"/>
    <property type="match status" value="2"/>
</dbReference>
<comment type="function">
    <text evidence="2">GDP-dissociation inhibitor preventing the GDP to GTP exchange of most Rab proteins. By keeping these small GTPases in their inactive GDP-bound form regulates intracellular membrane trafficking. Negatively regulates protein transport to the cilium and ciliogenesis through the inhibition of RAB8A.</text>
</comment>
<comment type="subunit">
    <text evidence="2">Interacts with RHOH. Interacts with the GDP-bound inactive forms of RAB3A, RAB3B, RAB3C, RAB5A, RAB5B, RAB5C, RAB8A, RAB8B, RAB10, RAB12, RAB35, and RAB43; binds RAB3D to a lesser extent. Interacts with DZIP1; this interaction negatively regulates the interaction of GDI2 with GDP-bound RAB8A.</text>
</comment>
<comment type="subcellular location">
    <subcellularLocation>
        <location evidence="1">Cytoplasm</location>
    </subcellularLocation>
    <subcellularLocation>
        <location evidence="1">Membrane</location>
        <topology evidence="1">Peripheral membrane protein</topology>
    </subcellularLocation>
    <subcellularLocation>
        <location evidence="2">Golgi apparatus</location>
        <location evidence="2">trans-Golgi network</location>
    </subcellularLocation>
</comment>
<comment type="similarity">
    <text evidence="5">Belongs to the Rab GDI family.</text>
</comment>
<evidence type="ECO:0000250" key="1"/>
<evidence type="ECO:0000250" key="2">
    <source>
        <dbReference type="UniProtKB" id="P50395"/>
    </source>
</evidence>
<evidence type="ECO:0000250" key="3">
    <source>
        <dbReference type="UniProtKB" id="P50399"/>
    </source>
</evidence>
<evidence type="ECO:0000250" key="4">
    <source>
        <dbReference type="UniProtKB" id="Q61598"/>
    </source>
</evidence>
<evidence type="ECO:0000305" key="5"/>
<sequence length="445" mass="50664">MNEEYDVIVLGTGLTECILSGIMSVNGKKVLHMDRNPYYGGESASITPLEDLYKRYKIPGSPPESMGRGRDWNVDLIPKFLMANGQLVKMLLYTEVTRYLDFKVTEGSFVYKGGKIYKVPSTEAEALASSLMGLFEKRRFRKFLVYVANFDEKDPRTFEGIDPKKTTMRDVYKKFDLGQDVIDFTGHALALYRTDDYLDQPCYETINRIKLYSESLARYGKSPYLYPLYGLGELPQGFARLSAIYGGTYMLNKPIEEIIVQNGKVIGVKSEGEIARCKQLICDPSYVKDRVEKVGQVIRVICILSHPIKNTNDANSCQIIIPQNQVNRKSDIYVCMISFAHNVAAQGKYIAIVSTTVETKEPEKEIRPALELLEPIEQKFVSISDLLVPKDLGTESLIFISRTYDATTHFETTCDDIKNIYKRMTGSEFDFEEMKRKKNDIYGED</sequence>
<organism>
    <name type="scientific">Pongo abelii</name>
    <name type="common">Sumatran orangutan</name>
    <name type="synonym">Pongo pygmaeus abelii</name>
    <dbReference type="NCBI Taxonomy" id="9601"/>
    <lineage>
        <taxon>Eukaryota</taxon>
        <taxon>Metazoa</taxon>
        <taxon>Chordata</taxon>
        <taxon>Craniata</taxon>
        <taxon>Vertebrata</taxon>
        <taxon>Euteleostomi</taxon>
        <taxon>Mammalia</taxon>
        <taxon>Eutheria</taxon>
        <taxon>Euarchontoglires</taxon>
        <taxon>Primates</taxon>
        <taxon>Haplorrhini</taxon>
        <taxon>Catarrhini</taxon>
        <taxon>Hominidae</taxon>
        <taxon>Pongo</taxon>
    </lineage>
</organism>
<feature type="chain" id="PRO_0000056682" description="Rab GDP dissociation inhibitor beta">
    <location>
        <begin position="1"/>
        <end position="445"/>
    </location>
</feature>
<feature type="modified residue" description="N-acetylmethionine" evidence="2">
    <location>
        <position position="1"/>
    </location>
</feature>
<feature type="modified residue" description="N6-succinyllysine" evidence="4">
    <location>
        <position position="57"/>
    </location>
</feature>
<feature type="modified residue" description="N6-acetyllysine" evidence="2">
    <location>
        <position position="112"/>
    </location>
</feature>
<feature type="modified residue" description="Phosphoserine" evidence="3">
    <location>
        <position position="130"/>
    </location>
</feature>
<feature type="modified residue" description="N6-acetyllysine" evidence="2">
    <location>
        <position position="269"/>
    </location>
</feature>
<feature type="modified residue" description="Phosphoserine" evidence="2">
    <location>
        <position position="382"/>
    </location>
</feature>
<accession>Q5RCE1</accession>
<gene>
    <name type="primary">GDI2</name>
</gene>
<keyword id="KW-0007">Acetylation</keyword>
<keyword id="KW-0963">Cytoplasm</keyword>
<keyword id="KW-0333">Golgi apparatus</keyword>
<keyword id="KW-0343">GTPase activation</keyword>
<keyword id="KW-0472">Membrane</keyword>
<keyword id="KW-0597">Phosphoprotein</keyword>
<keyword id="KW-1185">Reference proteome</keyword>
<name>GDIB_PONAB</name>
<reference key="1">
    <citation type="submission" date="2004-11" db="EMBL/GenBank/DDBJ databases">
        <authorList>
            <consortium name="The German cDNA consortium"/>
        </authorList>
    </citation>
    <scope>NUCLEOTIDE SEQUENCE [LARGE SCALE MRNA]</scope>
    <source>
        <tissue>Kidney</tissue>
    </source>
</reference>